<reference key="1">
    <citation type="journal article" date="1995" name="Science">
        <title>Whole-genome random sequencing and assembly of Haemophilus influenzae Rd.</title>
        <authorList>
            <person name="Fleischmann R.D."/>
            <person name="Adams M.D."/>
            <person name="White O."/>
            <person name="Clayton R.A."/>
            <person name="Kirkness E.F."/>
            <person name="Kerlavage A.R."/>
            <person name="Bult C.J."/>
            <person name="Tomb J.-F."/>
            <person name="Dougherty B.A."/>
            <person name="Merrick J.M."/>
            <person name="McKenney K."/>
            <person name="Sutton G.G."/>
            <person name="FitzHugh W."/>
            <person name="Fields C.A."/>
            <person name="Gocayne J.D."/>
            <person name="Scott J.D."/>
            <person name="Shirley R."/>
            <person name="Liu L.-I."/>
            <person name="Glodek A."/>
            <person name="Kelley J.M."/>
            <person name="Weidman J.F."/>
            <person name="Phillips C.A."/>
            <person name="Spriggs T."/>
            <person name="Hedblom E."/>
            <person name="Cotton M.D."/>
            <person name="Utterback T.R."/>
            <person name="Hanna M.C."/>
            <person name="Nguyen D.T."/>
            <person name="Saudek D.M."/>
            <person name="Brandon R.C."/>
            <person name="Fine L.D."/>
            <person name="Fritchman J.L."/>
            <person name="Fuhrmann J.L."/>
            <person name="Geoghagen N.S.M."/>
            <person name="Gnehm C.L."/>
            <person name="McDonald L.A."/>
            <person name="Small K.V."/>
            <person name="Fraser C.M."/>
            <person name="Smith H.O."/>
            <person name="Venter J.C."/>
        </authorList>
    </citation>
    <scope>NUCLEOTIDE SEQUENCE [LARGE SCALE GENOMIC DNA]</scope>
    <source>
        <strain>ATCC 51907 / DSM 11121 / KW20 / Rd</strain>
    </source>
</reference>
<protein>
    <recommendedName>
        <fullName>Uncharacterized protein HI_1404</fullName>
    </recommendedName>
</protein>
<gene>
    <name type="ordered locus">HI_1404</name>
</gene>
<name>Y1404_HAEIN</name>
<accession>P44179</accession>
<sequence length="39" mass="4311">MTVSISVPSASTSDFKKFAINHLDILPRQAGVQYLFNLT</sequence>
<keyword id="KW-1185">Reference proteome</keyword>
<feature type="chain" id="PRO_0000078042" description="Uncharacterized protein HI_1404">
    <location>
        <begin position="1"/>
        <end position="39"/>
    </location>
</feature>
<dbReference type="EMBL" id="L42023">
    <property type="protein sequence ID" value="AAC23054.1"/>
    <property type="molecule type" value="Genomic_DNA"/>
</dbReference>
<dbReference type="PIR" id="I64027">
    <property type="entry name" value="I64027"/>
</dbReference>
<dbReference type="SMR" id="P44179"/>
<dbReference type="STRING" id="71421.HI_1404"/>
<dbReference type="EnsemblBacteria" id="AAC23054">
    <property type="protein sequence ID" value="AAC23054"/>
    <property type="gene ID" value="HI_1404"/>
</dbReference>
<dbReference type="KEGG" id="hin:HI_1404"/>
<dbReference type="HOGENOM" id="CLU_3310578_0_0_6"/>
<dbReference type="Proteomes" id="UP000000579">
    <property type="component" value="Chromosome"/>
</dbReference>
<organism>
    <name type="scientific">Haemophilus influenzae (strain ATCC 51907 / DSM 11121 / KW20 / Rd)</name>
    <dbReference type="NCBI Taxonomy" id="71421"/>
    <lineage>
        <taxon>Bacteria</taxon>
        <taxon>Pseudomonadati</taxon>
        <taxon>Pseudomonadota</taxon>
        <taxon>Gammaproteobacteria</taxon>
        <taxon>Pasteurellales</taxon>
        <taxon>Pasteurellaceae</taxon>
        <taxon>Haemophilus</taxon>
    </lineage>
</organism>
<proteinExistence type="predicted"/>